<keyword id="KW-0903">Direct protein sequencing</keyword>
<keyword id="KW-1015">Disulfide bond</keyword>
<keyword id="KW-0255">Endonuclease</keyword>
<keyword id="KW-0378">Hydrolase</keyword>
<keyword id="KW-0456">Lyase</keyword>
<keyword id="KW-0540">Nuclease</keyword>
<keyword id="KW-0964">Secreted</keyword>
<protein>
    <recommendedName>
        <fullName>Ribonuclease pancreatic</fullName>
        <ecNumber>4.6.1.18</ecNumber>
    </recommendedName>
    <alternativeName>
        <fullName>RNase 1</fullName>
    </alternativeName>
    <alternativeName>
        <fullName>RNase A</fullName>
    </alternativeName>
</protein>
<proteinExistence type="evidence at protein level"/>
<comment type="function">
    <text evidence="1">Endonuclease that catalyzes the cleavage of RNA on the 3' side of pyrimidine nucleotides. Acts on single-stranded and double-stranded RNA (By similarity).</text>
</comment>
<comment type="catalytic activity">
    <reaction>
        <text>an [RNA] containing cytidine + H2O = an [RNA]-3'-cytidine-3'-phosphate + a 5'-hydroxy-ribonucleotide-3'-[RNA].</text>
        <dbReference type="EC" id="4.6.1.18"/>
    </reaction>
</comment>
<comment type="catalytic activity">
    <reaction>
        <text>an [RNA] containing uridine + H2O = an [RNA]-3'-uridine-3'-phosphate + a 5'-hydroxy-ribonucleotide-3'-[RNA].</text>
        <dbReference type="EC" id="4.6.1.18"/>
    </reaction>
</comment>
<comment type="subunit">
    <text evidence="1">Monomer. Interacts with and forms tight 1:1 complexes with RNH1. Dimerization of two such complexes may occur. Interaction with RNH1 inhibits this protein (By similarity).</text>
</comment>
<comment type="subcellular location">
    <subcellularLocation>
        <location>Secreted</location>
    </subcellularLocation>
</comment>
<comment type="tissue specificity">
    <text>Pancreas.</text>
</comment>
<comment type="similarity">
    <text evidence="3">Belongs to the pancreatic ribonuclease family.</text>
</comment>
<gene>
    <name type="primary">RNASE1</name>
    <name type="synonym">RNS1</name>
</gene>
<evidence type="ECO:0000250" key="1"/>
<evidence type="ECO:0000256" key="2">
    <source>
        <dbReference type="SAM" id="MobiDB-lite"/>
    </source>
</evidence>
<evidence type="ECO:0000305" key="3"/>
<dbReference type="EC" id="4.6.1.18"/>
<dbReference type="PIR" id="A91418">
    <property type="entry name" value="NRDEF"/>
</dbReference>
<dbReference type="SMR" id="P00665"/>
<dbReference type="GO" id="GO:0005576">
    <property type="term" value="C:extracellular region"/>
    <property type="evidence" value="ECO:0007669"/>
    <property type="project" value="UniProtKB-SubCell"/>
</dbReference>
<dbReference type="GO" id="GO:0016829">
    <property type="term" value="F:lyase activity"/>
    <property type="evidence" value="ECO:0007669"/>
    <property type="project" value="UniProtKB-KW"/>
</dbReference>
<dbReference type="GO" id="GO:0003676">
    <property type="term" value="F:nucleic acid binding"/>
    <property type="evidence" value="ECO:0007669"/>
    <property type="project" value="InterPro"/>
</dbReference>
<dbReference type="GO" id="GO:0004522">
    <property type="term" value="F:ribonuclease A activity"/>
    <property type="evidence" value="ECO:0007669"/>
    <property type="project" value="UniProtKB-EC"/>
</dbReference>
<dbReference type="GO" id="GO:0050830">
    <property type="term" value="P:defense response to Gram-positive bacterium"/>
    <property type="evidence" value="ECO:0007669"/>
    <property type="project" value="TreeGrafter"/>
</dbReference>
<dbReference type="CDD" id="cd06265">
    <property type="entry name" value="RNase_A_canonical"/>
    <property type="match status" value="1"/>
</dbReference>
<dbReference type="FunFam" id="3.10.130.10:FF:000001">
    <property type="entry name" value="Ribonuclease pancreatic"/>
    <property type="match status" value="1"/>
</dbReference>
<dbReference type="Gene3D" id="3.10.130.10">
    <property type="entry name" value="Ribonuclease A-like domain"/>
    <property type="match status" value="1"/>
</dbReference>
<dbReference type="InterPro" id="IPR001427">
    <property type="entry name" value="RNaseA"/>
</dbReference>
<dbReference type="InterPro" id="IPR036816">
    <property type="entry name" value="RNaseA-like_dom_sf"/>
</dbReference>
<dbReference type="InterPro" id="IPR023411">
    <property type="entry name" value="RNaseA_AS"/>
</dbReference>
<dbReference type="InterPro" id="IPR023412">
    <property type="entry name" value="RNaseA_domain"/>
</dbReference>
<dbReference type="PANTHER" id="PTHR11437">
    <property type="entry name" value="RIBONUCLEASE"/>
    <property type="match status" value="1"/>
</dbReference>
<dbReference type="PANTHER" id="PTHR11437:SF24">
    <property type="entry name" value="RIBONUCLEASE PANCREATIC"/>
    <property type="match status" value="1"/>
</dbReference>
<dbReference type="Pfam" id="PF00074">
    <property type="entry name" value="RnaseA"/>
    <property type="match status" value="1"/>
</dbReference>
<dbReference type="PRINTS" id="PR00794">
    <property type="entry name" value="RIBONUCLEASE"/>
</dbReference>
<dbReference type="SMART" id="SM00092">
    <property type="entry name" value="RNAse_Pc"/>
    <property type="match status" value="1"/>
</dbReference>
<dbReference type="SUPFAM" id="SSF54076">
    <property type="entry name" value="RNase A-like"/>
    <property type="match status" value="1"/>
</dbReference>
<dbReference type="PROSITE" id="PS00127">
    <property type="entry name" value="RNASE_PANCREATIC"/>
    <property type="match status" value="1"/>
</dbReference>
<organism>
    <name type="scientific">Dama dama</name>
    <name type="common">Fallow deer</name>
    <name type="synonym">Cervus dama</name>
    <dbReference type="NCBI Taxonomy" id="30532"/>
    <lineage>
        <taxon>Eukaryota</taxon>
        <taxon>Metazoa</taxon>
        <taxon>Chordata</taxon>
        <taxon>Craniata</taxon>
        <taxon>Vertebrata</taxon>
        <taxon>Euteleostomi</taxon>
        <taxon>Mammalia</taxon>
        <taxon>Eutheria</taxon>
        <taxon>Laurasiatheria</taxon>
        <taxon>Artiodactyla</taxon>
        <taxon>Ruminantia</taxon>
        <taxon>Pecora</taxon>
        <taxon>Cervidae</taxon>
        <taxon>Cervinae</taxon>
        <taxon>Dama</taxon>
    </lineage>
</organism>
<feature type="chain" id="PRO_0000057194" description="Ribonuclease pancreatic">
    <location>
        <begin position="1"/>
        <end position="124"/>
    </location>
</feature>
<feature type="region of interest" description="Disordered" evidence="2">
    <location>
        <begin position="1"/>
        <end position="24"/>
    </location>
</feature>
<feature type="compositionally biased region" description="Basic and acidic residues" evidence="2">
    <location>
        <begin position="1"/>
        <end position="13"/>
    </location>
</feature>
<feature type="active site" description="Proton acceptor" evidence="1">
    <location>
        <position position="12"/>
    </location>
</feature>
<feature type="active site" description="Proton donor" evidence="1">
    <location>
        <position position="119"/>
    </location>
</feature>
<feature type="binding site" evidence="1">
    <location>
        <position position="7"/>
    </location>
    <ligand>
        <name>substrate</name>
    </ligand>
</feature>
<feature type="binding site" evidence="1">
    <location>
        <position position="10"/>
    </location>
    <ligand>
        <name>substrate</name>
    </ligand>
</feature>
<feature type="binding site" evidence="1">
    <location>
        <begin position="41"/>
        <end position="45"/>
    </location>
    <ligand>
        <name>substrate</name>
    </ligand>
</feature>
<feature type="binding site" evidence="1">
    <location>
        <position position="66"/>
    </location>
    <ligand>
        <name>substrate</name>
    </ligand>
</feature>
<feature type="binding site" evidence="1">
    <location>
        <position position="85"/>
    </location>
    <ligand>
        <name>substrate</name>
    </ligand>
</feature>
<feature type="disulfide bond" evidence="1">
    <location>
        <begin position="26"/>
        <end position="84"/>
    </location>
</feature>
<feature type="disulfide bond" evidence="1">
    <location>
        <begin position="40"/>
        <end position="95"/>
    </location>
</feature>
<feature type="disulfide bond" evidence="1">
    <location>
        <begin position="58"/>
        <end position="110"/>
    </location>
</feature>
<feature type="disulfide bond" evidence="1">
    <location>
        <begin position="65"/>
        <end position="72"/>
    </location>
</feature>
<accession>P00665</accession>
<sequence>KESAAAKFERQHMDPSMSSASSSNYCNQMMQSRKMTQDRCKPVNTFVHESLADVQAVCFQKNVACKNGQSNCYQSNSAMHITDCRESGNSKYPNCVYKATQAEKHIIVACEGNPYVPVHFDASV</sequence>
<name>RNAS1_DAMDA</name>
<reference key="1">
    <citation type="journal article" date="1975" name="FEBS Lett.">
        <title>The amino acid sequences of reindeer, moose and fallow deer pancreatic ribonucleases.</title>
        <authorList>
            <person name="Leijenaar-Van den Berg G."/>
            <person name="Beintema J.J."/>
        </authorList>
    </citation>
    <scope>PARTIAL PROTEIN SEQUENCE</scope>
</reference>